<organism>
    <name type="scientific">Human herpesvirus 6A (strain Uganda-1102)</name>
    <name type="common">HHV-6 variant A</name>
    <name type="synonym">Human B lymphotropic virus</name>
    <dbReference type="NCBI Taxonomy" id="10370"/>
    <lineage>
        <taxon>Viruses</taxon>
        <taxon>Duplodnaviria</taxon>
        <taxon>Heunggongvirae</taxon>
        <taxon>Peploviricota</taxon>
        <taxon>Herviviricetes</taxon>
        <taxon>Herpesvirales</taxon>
        <taxon>Orthoherpesviridae</taxon>
        <taxon>Betaherpesvirinae</taxon>
        <taxon>Roseolovirus</taxon>
        <taxon>Roseolovirus humanbeta6a</taxon>
        <taxon>Human betaherpesvirus 6A</taxon>
    </lineage>
</organism>
<feature type="signal peptide" evidence="1">
    <location>
        <begin position="1"/>
        <end position="19"/>
    </location>
</feature>
<feature type="chain" id="PRO_0000438170" description="Glycoprotein Q2" evidence="1">
    <location>
        <begin position="20"/>
        <end position="214"/>
    </location>
</feature>
<feature type="glycosylation site" description="N-linked (GlcNAc...) asparagine; by host" evidence="2">
    <location>
        <position position="41"/>
    </location>
</feature>
<feature type="glycosylation site" description="N-linked (GlcNAc...) asparagine; by host" evidence="2">
    <location>
        <position position="74"/>
    </location>
</feature>
<feature type="glycosylation site" description="N-linked (GlcNAc...) asparagine; by host" evidence="2">
    <location>
        <position position="110"/>
    </location>
</feature>
<feature type="glycosylation site" description="N-linked (GlcNAc...) asparagine; by host" evidence="2">
    <location>
        <position position="210"/>
    </location>
</feature>
<proteinExistence type="evidence at protein level"/>
<organismHost>
    <name type="scientific">Homo sapiens</name>
    <name type="common">Human</name>
    <dbReference type="NCBI Taxonomy" id="9606"/>
</organismHost>
<keyword id="KW-0025">Alternative splicing</keyword>
<keyword id="KW-0325">Glycoprotein</keyword>
<keyword id="KW-0945">Host-virus interaction</keyword>
<keyword id="KW-0426">Late protein</keyword>
<keyword id="KW-0472">Membrane</keyword>
<keyword id="KW-1185">Reference proteome</keyword>
<keyword id="KW-0732">Signal</keyword>
<keyword id="KW-1161">Viral attachment to host cell</keyword>
<keyword id="KW-1234">Viral attachment to host entry receptor</keyword>
<keyword id="KW-0946">Virion</keyword>
<keyword id="KW-1160">Virus entry into host cell</keyword>
<comment type="function">
    <text evidence="4">Plays a role in virus entry by participating in host receptor binding at the cell surface.</text>
</comment>
<comment type="subunit">
    <text evidence="3 4">Interacts with isoform gQ1 (PubMed:15254169). The heterodimer gQ1-gQ2 associates with the glycoprotein complex gH-gL to form a tetrameric complex (PubMed:15254169). The gH/gL/gQ1/gQ2 complex binds to human receptor CD46 (PubMed:24215487).</text>
</comment>
<comment type="subcellular location">
    <subcellularLocation>
        <location>Virion membrane</location>
    </subcellularLocation>
    <subcellularLocation>
        <location evidence="3">Host endoplasmic reticulum-Golgi intermediate compartment</location>
    </subcellularLocation>
</comment>
<comment type="alternative products">
    <event type="alternative splicing"/>
    <isoform>
        <id>P0DOE0-1</id>
        <name evidence="5">Glycoprotein Q2</name>
        <sequence type="displayed"/>
    </isoform>
    <isoform>
        <id>Q69572-1</id>
        <name evidence="5">Glycoprotein Q1</name>
        <sequence type="external"/>
    </isoform>
    <isoform>
        <id>P0DOE0-2</id>
        <name evidence="5">Glycoprotein Q0</name>
        <sequence type="not described"/>
    </isoform>
</comment>
<comment type="PTM">
    <text evidence="3">Glycosylated by host.</text>
</comment>
<comment type="miscellaneous">
    <molecule>Isoform Glycoprotein Q0</molecule>
    <text evidence="3">This chain is predicted but has not been detected in HHV-6A-infected cells and virion.</text>
</comment>
<comment type="sequence caution" evidence="3">
    <conflict type="erroneous gene model prediction">
        <sequence resource="EMBL" id="X83413"/>
    </conflict>
</comment>
<evidence type="ECO:0000255" key="1"/>
<evidence type="ECO:0000255" key="2">
    <source>
        <dbReference type="PROSITE-ProRule" id="PRU00498"/>
    </source>
</evidence>
<evidence type="ECO:0000269" key="3">
    <source>
    </source>
</evidence>
<evidence type="ECO:0000269" key="4">
    <source>
    </source>
</evidence>
<evidence type="ECO:0000303" key="5">
    <source>
    </source>
</evidence>
<gene>
    <name type="ORF">U100</name>
</gene>
<protein>
    <recommendedName>
        <fullName>Glycoprotein Q2</fullName>
        <shortName>gQ2</shortName>
    </recommendedName>
    <alternativeName>
        <fullName>Glycoprotein Q-37k</fullName>
        <shortName>gQ-37k</shortName>
    </alternativeName>
</protein>
<dbReference type="EMBL" id="X83413">
    <property type="status" value="NOT_ANNOTATED_CDS"/>
    <property type="molecule type" value="Genomic_DNA"/>
</dbReference>
<dbReference type="Proteomes" id="UP000009295">
    <property type="component" value="Segment"/>
</dbReference>
<dbReference type="GO" id="GO:0044172">
    <property type="term" value="C:host cell endoplasmic reticulum-Golgi intermediate compartment"/>
    <property type="evidence" value="ECO:0007669"/>
    <property type="project" value="UniProtKB-SubCell"/>
</dbReference>
<dbReference type="GO" id="GO:0016020">
    <property type="term" value="C:membrane"/>
    <property type="evidence" value="ECO:0007669"/>
    <property type="project" value="UniProtKB-KW"/>
</dbReference>
<dbReference type="GO" id="GO:0055036">
    <property type="term" value="C:virion membrane"/>
    <property type="evidence" value="ECO:0007669"/>
    <property type="project" value="UniProtKB-SubCell"/>
</dbReference>
<dbReference type="GO" id="GO:0098670">
    <property type="term" value="P:entry receptor-mediated virion attachment to host cell"/>
    <property type="evidence" value="ECO:0007669"/>
    <property type="project" value="UniProtKB-KW"/>
</dbReference>
<dbReference type="GO" id="GO:0046718">
    <property type="term" value="P:symbiont entry into host cell"/>
    <property type="evidence" value="ECO:0007669"/>
    <property type="project" value="UniProtKB-KW"/>
</dbReference>
<reference key="1">
    <citation type="journal article" date="1992" name="J. Gen. Virol.">
        <title>The right end of the unique region of the genome of human herpesvirus 6 U1102 contains a candidate immediate early gene enhancer and a homologue of the human cytomegalovirus US22 gene family.</title>
        <authorList>
            <person name="Thomson B.J."/>
            <person name="Honess R.W."/>
        </authorList>
    </citation>
    <scope>NUCLEOTIDE SEQUENCE [GENOMIC DNA]</scope>
</reference>
<reference key="2">
    <citation type="journal article" date="2004" name="J. Virol.">
        <title>Intracellular processing of human herpesvirus 6 glycoproteins Q1 and Q2 into tetrameric complexes expressed on the viral envelope.</title>
        <authorList>
            <person name="Akkapaiboon P."/>
            <person name="Mori Y."/>
            <person name="Sadaoka T."/>
            <person name="Yonemoto S."/>
            <person name="Yamanishi K."/>
        </authorList>
    </citation>
    <scope>CHARACTERIZATION</scope>
    <scope>SUBCELLULAR LOCATION</scope>
    <scope>SUBUNIT</scope>
    <source>
        <strain>GS</strain>
    </source>
</reference>
<reference key="3">
    <citation type="journal article" date="2014" name="Microbiol. Immunol.">
        <title>Human herpesvirus-6A gQ1 and gQ2 are critical for human CD46 usage.</title>
        <authorList>
            <person name="Jasirwan C."/>
            <person name="Furusawa Y."/>
            <person name="Tang H."/>
            <person name="Maeki T."/>
            <person name="Mori Y."/>
        </authorList>
    </citation>
    <scope>FUNCTION</scope>
    <scope>INTERACTION WITH HOST CD46</scope>
</reference>
<accession>P0DOE0</accession>
<name>GQ2_HHV6U</name>
<sequence length="214" mass="25121">MHFLVVYILIHFHAYRGMAALPLFSTLPKITSCCDSYVVINSSTSVSSLISTCLDGEILFQNEGQKFCRPLTDNRTIVYTMQDQVQKPLSVTWMDFNLVISDYGRDVINNLTKSAMLARKNGPRYLQMENGPRYLQMETRISDLFRHECYQDNYYVLDKKLQMFYPTTHSNELLFYPSEATLPSPWQEPPFSSPWPEPTFPSRWYWLLLNYTNY</sequence>